<name>ITA3_CRIGR</name>
<accession>P17852</accession>
<evidence type="ECO:0000250" key="1"/>
<evidence type="ECO:0000250" key="2">
    <source>
        <dbReference type="UniProtKB" id="P08648"/>
    </source>
</evidence>
<evidence type="ECO:0000250" key="3">
    <source>
        <dbReference type="UniProtKB" id="P26006"/>
    </source>
</evidence>
<evidence type="ECO:0000255" key="4"/>
<evidence type="ECO:0000255" key="5">
    <source>
        <dbReference type="PROSITE-ProRule" id="PRU00803"/>
    </source>
</evidence>
<evidence type="ECO:0000256" key="6">
    <source>
        <dbReference type="SAM" id="MobiDB-lite"/>
    </source>
</evidence>
<evidence type="ECO:0000305" key="7"/>
<reference key="1">
    <citation type="journal article" date="1990" name="J. Biol. Chem.">
        <title>Characterization through cDNA cloning of galactoprotein b3 (Gap b3), a cell surface membrane glycoprotein showing enhanced expression on oncogenic transformation. Identification of Gap b3 as a member of the integrin superfamily.</title>
        <authorList>
            <person name="Tsuji T."/>
            <person name="Yamamoto F."/>
            <person name="Miura Y."/>
            <person name="Takio K."/>
            <person name="Titani K."/>
            <person name="Pawar S."/>
            <person name="Osawa T."/>
            <person name="Hakomori S."/>
        </authorList>
    </citation>
    <scope>NUCLEOTIDE SEQUENCE [MRNA] (ISOFORM 1)</scope>
    <scope>PARTIAL PROTEIN SEQUENCE</scope>
    <source>
        <tissue>Fibroblast</tissue>
    </source>
</reference>
<reference key="2">
    <citation type="journal article" date="1991" name="Proc. Natl. Acad. Sci. U.S.A.">
        <title>Cell type-specific integrin variants with alternative alpha chain cytoplasmic domains.</title>
        <authorList>
            <person name="Tamura R.N."/>
            <person name="Cooper H.M."/>
            <person name="Collo G."/>
            <person name="Quaranta V."/>
        </authorList>
    </citation>
    <scope>ALTERNATIVE SPLICING</scope>
</reference>
<proteinExistence type="evidence at protein level"/>
<dbReference type="EMBL" id="J05281">
    <property type="protein sequence ID" value="AAA56794.1"/>
    <property type="molecule type" value="mRNA"/>
</dbReference>
<dbReference type="PIR" id="A35761">
    <property type="entry name" value="A35761"/>
</dbReference>
<dbReference type="SMR" id="P17852"/>
<dbReference type="GlyCosmos" id="P17852">
    <property type="glycosylation" value="12 sites, No reported glycans"/>
</dbReference>
<dbReference type="PaxDb" id="10029-XP_003504003.1"/>
<dbReference type="eggNOG" id="KOG3637">
    <property type="taxonomic scope" value="Eukaryota"/>
</dbReference>
<dbReference type="Proteomes" id="UP000694386">
    <property type="component" value="Unplaced"/>
</dbReference>
<dbReference type="Proteomes" id="UP001108280">
    <property type="component" value="Unplaced"/>
</dbReference>
<dbReference type="GO" id="GO:0070161">
    <property type="term" value="C:anchoring junction"/>
    <property type="evidence" value="ECO:0007669"/>
    <property type="project" value="UniProtKB-KW"/>
</dbReference>
<dbReference type="GO" id="GO:0009897">
    <property type="term" value="C:external side of plasma membrane"/>
    <property type="evidence" value="ECO:0007669"/>
    <property type="project" value="TreeGrafter"/>
</dbReference>
<dbReference type="GO" id="GO:0031527">
    <property type="term" value="C:filopodium membrane"/>
    <property type="evidence" value="ECO:0000250"/>
    <property type="project" value="UniProtKB"/>
</dbReference>
<dbReference type="GO" id="GO:0008305">
    <property type="term" value="C:integrin complex"/>
    <property type="evidence" value="ECO:0007669"/>
    <property type="project" value="InterPro"/>
</dbReference>
<dbReference type="GO" id="GO:0005178">
    <property type="term" value="F:integrin binding"/>
    <property type="evidence" value="ECO:0007669"/>
    <property type="project" value="TreeGrafter"/>
</dbReference>
<dbReference type="GO" id="GO:0046872">
    <property type="term" value="F:metal ion binding"/>
    <property type="evidence" value="ECO:0007669"/>
    <property type="project" value="UniProtKB-KW"/>
</dbReference>
<dbReference type="GO" id="GO:0046982">
    <property type="term" value="F:protein heterodimerization activity"/>
    <property type="evidence" value="ECO:0000250"/>
    <property type="project" value="UniProtKB"/>
</dbReference>
<dbReference type="GO" id="GO:0033627">
    <property type="term" value="P:cell adhesion mediated by integrin"/>
    <property type="evidence" value="ECO:0007669"/>
    <property type="project" value="TreeGrafter"/>
</dbReference>
<dbReference type="GO" id="GO:0098609">
    <property type="term" value="P:cell-cell adhesion"/>
    <property type="evidence" value="ECO:0007669"/>
    <property type="project" value="TreeGrafter"/>
</dbReference>
<dbReference type="GO" id="GO:0007160">
    <property type="term" value="P:cell-matrix adhesion"/>
    <property type="evidence" value="ECO:0007669"/>
    <property type="project" value="TreeGrafter"/>
</dbReference>
<dbReference type="GO" id="GO:0007229">
    <property type="term" value="P:integrin-mediated signaling pathway"/>
    <property type="evidence" value="ECO:0007669"/>
    <property type="project" value="UniProtKB-KW"/>
</dbReference>
<dbReference type="GO" id="GO:0050900">
    <property type="term" value="P:leukocyte migration"/>
    <property type="evidence" value="ECO:0007669"/>
    <property type="project" value="TreeGrafter"/>
</dbReference>
<dbReference type="GO" id="GO:1903078">
    <property type="term" value="P:positive regulation of protein localization to plasma membrane"/>
    <property type="evidence" value="ECO:0000250"/>
    <property type="project" value="UniProtKB"/>
</dbReference>
<dbReference type="FunFam" id="2.60.40.1460:FF:000004">
    <property type="entry name" value="integrin alpha-3 isoform X2"/>
    <property type="match status" value="1"/>
</dbReference>
<dbReference type="FunFam" id="2.130.10.130:FF:000007">
    <property type="entry name" value="Integrin subunit alpha 3"/>
    <property type="match status" value="1"/>
</dbReference>
<dbReference type="FunFam" id="2.60.40.1510:FF:000012">
    <property type="entry name" value="Integrin subunit alpha 3"/>
    <property type="match status" value="1"/>
</dbReference>
<dbReference type="FunFam" id="2.60.40.1530:FF:000004">
    <property type="entry name" value="Integrin subunit alpha 3"/>
    <property type="match status" value="1"/>
</dbReference>
<dbReference type="FunFam" id="1.20.5.930:FF:000001">
    <property type="entry name" value="Integrin subunit alpha V"/>
    <property type="match status" value="1"/>
</dbReference>
<dbReference type="Gene3D" id="1.20.5.930">
    <property type="entry name" value="Bicelle-embedded integrin alpha(iib) transmembrane segment"/>
    <property type="match status" value="1"/>
</dbReference>
<dbReference type="Gene3D" id="2.130.10.130">
    <property type="entry name" value="Integrin alpha, N-terminal"/>
    <property type="match status" value="1"/>
</dbReference>
<dbReference type="Gene3D" id="2.60.40.1460">
    <property type="entry name" value="Integrin domains. Chain A, domain 2"/>
    <property type="match status" value="1"/>
</dbReference>
<dbReference type="Gene3D" id="2.60.40.1510">
    <property type="entry name" value="ntegrin, alpha v. Chain A, domain 3"/>
    <property type="match status" value="1"/>
</dbReference>
<dbReference type="Gene3D" id="2.60.40.1530">
    <property type="entry name" value="ntegrin, alpha v. Chain A, domain 4"/>
    <property type="match status" value="1"/>
</dbReference>
<dbReference type="InterPro" id="IPR013517">
    <property type="entry name" value="FG-GAP"/>
</dbReference>
<dbReference type="InterPro" id="IPR013519">
    <property type="entry name" value="Int_alpha_beta-p"/>
</dbReference>
<dbReference type="InterPro" id="IPR000413">
    <property type="entry name" value="Integrin_alpha"/>
</dbReference>
<dbReference type="InterPro" id="IPR018184">
    <property type="entry name" value="Integrin_alpha_C_CS"/>
</dbReference>
<dbReference type="InterPro" id="IPR013649">
    <property type="entry name" value="Integrin_alpha_Ig-like_1"/>
</dbReference>
<dbReference type="InterPro" id="IPR048285">
    <property type="entry name" value="Integrin_alpha_Ig-like_2"/>
</dbReference>
<dbReference type="InterPro" id="IPR048286">
    <property type="entry name" value="Integrin_alpha_Ig-like_3"/>
</dbReference>
<dbReference type="InterPro" id="IPR028994">
    <property type="entry name" value="Integrin_alpha_N"/>
</dbReference>
<dbReference type="InterPro" id="IPR032695">
    <property type="entry name" value="Integrin_dom_sf"/>
</dbReference>
<dbReference type="PANTHER" id="PTHR23220">
    <property type="entry name" value="INTEGRIN ALPHA"/>
    <property type="match status" value="1"/>
</dbReference>
<dbReference type="PANTHER" id="PTHR23220:SF89">
    <property type="entry name" value="INTEGRIN ALPHA-3"/>
    <property type="match status" value="1"/>
</dbReference>
<dbReference type="Pfam" id="PF01839">
    <property type="entry name" value="FG-GAP"/>
    <property type="match status" value="2"/>
</dbReference>
<dbReference type="Pfam" id="PF08441">
    <property type="entry name" value="Integrin_A_Ig_1"/>
    <property type="match status" value="1"/>
</dbReference>
<dbReference type="Pfam" id="PF20805">
    <property type="entry name" value="Integrin_A_Ig_2"/>
    <property type="match status" value="1"/>
</dbReference>
<dbReference type="Pfam" id="PF20806">
    <property type="entry name" value="Integrin_A_Ig_3"/>
    <property type="match status" value="1"/>
</dbReference>
<dbReference type="PRINTS" id="PR01185">
    <property type="entry name" value="INTEGRINA"/>
</dbReference>
<dbReference type="SMART" id="SM00191">
    <property type="entry name" value="Int_alpha"/>
    <property type="match status" value="5"/>
</dbReference>
<dbReference type="SUPFAM" id="SSF69318">
    <property type="entry name" value="Integrin alpha N-terminal domain"/>
    <property type="match status" value="1"/>
</dbReference>
<dbReference type="SUPFAM" id="SSF69179">
    <property type="entry name" value="Integrin domains"/>
    <property type="match status" value="3"/>
</dbReference>
<dbReference type="PROSITE" id="PS51470">
    <property type="entry name" value="FG_GAP"/>
    <property type="match status" value="7"/>
</dbReference>
<dbReference type="PROSITE" id="PS00242">
    <property type="entry name" value="INTEGRIN_ALPHA"/>
    <property type="match status" value="1"/>
</dbReference>
<keyword id="KW-0025">Alternative splicing</keyword>
<keyword id="KW-0106">Calcium</keyword>
<keyword id="KW-0130">Cell adhesion</keyword>
<keyword id="KW-0965">Cell junction</keyword>
<keyword id="KW-1003">Cell membrane</keyword>
<keyword id="KW-0966">Cell projection</keyword>
<keyword id="KW-0165">Cleavage on pair of basic residues</keyword>
<keyword id="KW-0903">Direct protein sequencing</keyword>
<keyword id="KW-1015">Disulfide bond</keyword>
<keyword id="KW-0325">Glycoprotein</keyword>
<keyword id="KW-0401">Integrin</keyword>
<keyword id="KW-0449">Lipoprotein</keyword>
<keyword id="KW-0472">Membrane</keyword>
<keyword id="KW-0479">Metal-binding</keyword>
<keyword id="KW-0597">Phosphoprotein</keyword>
<keyword id="KW-0675">Receptor</keyword>
<keyword id="KW-0677">Repeat</keyword>
<keyword id="KW-0732">Signal</keyword>
<keyword id="KW-0812">Transmembrane</keyword>
<keyword id="KW-1133">Transmembrane helix</keyword>
<protein>
    <recommendedName>
        <fullName>Integrin alpha-3</fullName>
    </recommendedName>
    <alternativeName>
        <fullName>CD49 antigen-like family member C</fullName>
    </alternativeName>
    <alternativeName>
        <fullName>Galactoprotein B3</fullName>
        <shortName>GAPB3</shortName>
    </alternativeName>
    <alternativeName>
        <fullName>VLA-3 subunit alpha</fullName>
    </alternativeName>
    <cdAntigenName>CD49c</cdAntigenName>
    <component>
        <recommendedName>
            <fullName>Integrin alpha-3 heavy chain</fullName>
        </recommendedName>
    </component>
    <component>
        <recommendedName>
            <fullName>Integrin alpha-3 light chain</fullName>
        </recommendedName>
    </component>
</protein>
<gene>
    <name type="primary">ITGA3</name>
</gene>
<comment type="function">
    <text evidence="3">Integrin alpha-3/beta-1 is a receptor for fibronectin, laminin, collagen, epiligrin, thrombospondin and CSPG4. Integrin alpha-3/beta-1 provides a docking site for FAP (seprase) at invadopodia plasma membranes in a collagen-dependent manner and hence may participate in the adhesion, formation of invadopodia and matrix degradation processes, promoting cell invasion. Alpha-3/beta-1 may mediate with LGALS3 the stimulation by CSPG4 of endothelial cells migration.</text>
</comment>
<comment type="subunit">
    <text evidence="3">Heterodimer of an alpha and a beta subunit. The alpha subunit is composed of a heavy and a light chain linked by a disulfide bond. Alpha-3 associates with beta-1. Interacts with HPS5. Interacts with FAP (seprase); the interaction occurs at the cell surface of invadopodia membrane in a collagen-dependent manner.</text>
</comment>
<comment type="subcellular location">
    <subcellularLocation>
        <location>Cell membrane</location>
        <topology>Single-pass type I membrane protein</topology>
    </subcellularLocation>
    <subcellularLocation>
        <location evidence="1">Cell membrane</location>
        <topology evidence="1">Lipid-anchor</topology>
    </subcellularLocation>
    <subcellularLocation>
        <location evidence="3">Cell projection</location>
        <location evidence="3">Invadopodium membrane</location>
        <topology evidence="4">Single-pass type I membrane protein</topology>
    </subcellularLocation>
    <subcellularLocation>
        <location evidence="3">Cell projection</location>
        <location evidence="3">Filopodium membrane</location>
        <topology evidence="4">Single-pass type I membrane protein</topology>
    </subcellularLocation>
    <text evidence="3">Enriched preferentially at invadopodia, cell membrane protrusions that correspond to sites of cell invasion, in a collagen-dependent manner.</text>
</comment>
<comment type="alternative products">
    <event type="alternative splicing"/>
    <isoform>
        <id>P17852-1</id>
        <name>1</name>
        <name>Alpha-3A</name>
        <sequence type="displayed"/>
    </isoform>
    <isoform>
        <id>P17852-2</id>
        <name>2</name>
        <name>Alpha-3B</name>
        <sequence type="described" ref="VSP_002720"/>
    </isoform>
</comment>
<comment type="PTM">
    <text>Isoform 1, but not isoform 2, is phosphorylated on serine residues.</text>
</comment>
<comment type="similarity">
    <text evidence="7">Belongs to the integrin alpha chain family.</text>
</comment>
<feature type="signal peptide">
    <location>
        <begin position="1"/>
        <end position="32"/>
    </location>
</feature>
<feature type="chain" id="PRO_0000016235" description="Integrin alpha-3">
    <location>
        <begin position="33"/>
        <end position="1051"/>
    </location>
</feature>
<feature type="chain" id="PRO_0000016236" description="Integrin alpha-3 heavy chain" evidence="4">
    <location>
        <begin position="33"/>
        <end position="872"/>
    </location>
</feature>
<feature type="chain" id="PRO_0000016237" description="Integrin alpha-3 light chain" evidence="4">
    <location>
        <begin position="876"/>
        <end position="1051"/>
    </location>
</feature>
<feature type="topological domain" description="Extracellular" evidence="4">
    <location>
        <begin position="33"/>
        <end position="991"/>
    </location>
</feature>
<feature type="transmembrane region" description="Helical" evidence="4">
    <location>
        <begin position="992"/>
        <end position="1019"/>
    </location>
</feature>
<feature type="topological domain" description="Cytoplasmic" evidence="4">
    <location>
        <begin position="1020"/>
        <end position="1051"/>
    </location>
</feature>
<feature type="repeat" description="FG-GAP 1" evidence="5">
    <location>
        <begin position="38"/>
        <end position="103"/>
    </location>
</feature>
<feature type="repeat" description="FG-GAP 2" evidence="5">
    <location>
        <begin position="110"/>
        <end position="171"/>
    </location>
</feature>
<feature type="repeat" description="FG-GAP 3" evidence="5">
    <location>
        <begin position="185"/>
        <end position="235"/>
    </location>
</feature>
<feature type="repeat" description="FG-GAP 4" evidence="5">
    <location>
        <begin position="236"/>
        <end position="292"/>
    </location>
</feature>
<feature type="repeat" description="FG-GAP 5" evidence="5">
    <location>
        <begin position="293"/>
        <end position="354"/>
    </location>
</feature>
<feature type="repeat" description="FG-GAP 6" evidence="5">
    <location>
        <begin position="356"/>
        <end position="411"/>
    </location>
</feature>
<feature type="repeat" description="FG-GAP 7" evidence="5">
    <location>
        <begin position="415"/>
        <end position="477"/>
    </location>
</feature>
<feature type="region of interest" description="Disordered" evidence="6">
    <location>
        <begin position="860"/>
        <end position="888"/>
    </location>
</feature>
<feature type="short sequence motif" description="GFFKR motif">
    <location>
        <begin position="1017"/>
        <end position="1021"/>
    </location>
</feature>
<feature type="binding site" evidence="2">
    <location>
        <position position="315"/>
    </location>
    <ligand>
        <name>Ca(2+)</name>
        <dbReference type="ChEBI" id="CHEBI:29108"/>
        <label>1</label>
    </ligand>
</feature>
<feature type="binding site" evidence="2">
    <location>
        <position position="317"/>
    </location>
    <ligand>
        <name>Ca(2+)</name>
        <dbReference type="ChEBI" id="CHEBI:29108"/>
        <label>1</label>
    </ligand>
</feature>
<feature type="binding site" evidence="2">
    <location>
        <position position="319"/>
    </location>
    <ligand>
        <name>Ca(2+)</name>
        <dbReference type="ChEBI" id="CHEBI:29108"/>
        <label>1</label>
    </ligand>
</feature>
<feature type="binding site" evidence="2">
    <location>
        <position position="323"/>
    </location>
    <ligand>
        <name>Ca(2+)</name>
        <dbReference type="ChEBI" id="CHEBI:29108"/>
        <label>1</label>
    </ligand>
</feature>
<feature type="binding site" evidence="2">
    <location>
        <position position="378"/>
    </location>
    <ligand>
        <name>Ca(2+)</name>
        <dbReference type="ChEBI" id="CHEBI:29108"/>
        <label>2</label>
    </ligand>
</feature>
<feature type="binding site" evidence="2">
    <location>
        <position position="380"/>
    </location>
    <ligand>
        <name>Ca(2+)</name>
        <dbReference type="ChEBI" id="CHEBI:29108"/>
        <label>2</label>
    </ligand>
</feature>
<feature type="binding site" evidence="2">
    <location>
        <position position="382"/>
    </location>
    <ligand>
        <name>Ca(2+)</name>
        <dbReference type="ChEBI" id="CHEBI:29108"/>
        <label>2</label>
    </ligand>
</feature>
<feature type="binding site" evidence="2">
    <location>
        <position position="386"/>
    </location>
    <ligand>
        <name>Ca(2+)</name>
        <dbReference type="ChEBI" id="CHEBI:29108"/>
        <label>2</label>
    </ligand>
</feature>
<feature type="binding site" evidence="2">
    <location>
        <position position="439"/>
    </location>
    <ligand>
        <name>Ca(2+)</name>
        <dbReference type="ChEBI" id="CHEBI:29108"/>
        <label>3</label>
    </ligand>
</feature>
<feature type="binding site" evidence="2">
    <location>
        <position position="441"/>
    </location>
    <ligand>
        <name>Ca(2+)</name>
        <dbReference type="ChEBI" id="CHEBI:29108"/>
        <label>3</label>
    </ligand>
</feature>
<feature type="binding site" evidence="2">
    <location>
        <position position="443"/>
    </location>
    <ligand>
        <name>Ca(2+)</name>
        <dbReference type="ChEBI" id="CHEBI:29108"/>
        <label>3</label>
    </ligand>
</feature>
<feature type="binding site" evidence="2">
    <location>
        <position position="445"/>
    </location>
    <ligand>
        <name>Ca(2+)</name>
        <dbReference type="ChEBI" id="CHEBI:29108"/>
        <label>3</label>
    </ligand>
</feature>
<feature type="binding site" evidence="2">
    <location>
        <position position="447"/>
    </location>
    <ligand>
        <name>Ca(2+)</name>
        <dbReference type="ChEBI" id="CHEBI:29108"/>
        <label>3</label>
    </ligand>
</feature>
<feature type="glycosylation site" description="N-linked (GlcNAc...) asparagine" evidence="4">
    <location>
        <position position="86"/>
    </location>
</feature>
<feature type="glycosylation site" description="N-linked (GlcNAc...) asparagine" evidence="4">
    <location>
        <position position="500"/>
    </location>
</feature>
<feature type="glycosylation site" description="N-linked (GlcNAc...) asparagine" evidence="4">
    <location>
        <position position="511"/>
    </location>
</feature>
<feature type="glycosylation site" description="N-linked (GlcNAc...) asparagine" evidence="4">
    <location>
        <position position="573"/>
    </location>
</feature>
<feature type="glycosylation site" description="N-linked (GlcNAc...) asparagine" evidence="4">
    <location>
        <position position="605"/>
    </location>
</feature>
<feature type="glycosylation site" description="N-linked (GlcNAc...) asparagine" evidence="4">
    <location>
        <position position="656"/>
    </location>
</feature>
<feature type="glycosylation site" description="N-linked (GlcNAc...) asparagine" evidence="4">
    <location>
        <position position="697"/>
    </location>
</feature>
<feature type="glycosylation site" description="N-linked (GlcNAc...) asparagine" evidence="4">
    <location>
        <position position="841"/>
    </location>
</feature>
<feature type="glycosylation site" description="N-linked (GlcNAc...) asparagine" evidence="4">
    <location>
        <position position="923"/>
    </location>
</feature>
<feature type="glycosylation site" description="N-linked (GlcNAc...) asparagine" evidence="4">
    <location>
        <position position="926"/>
    </location>
</feature>
<feature type="glycosylation site" description="N-linked (GlcNAc...) asparagine" evidence="4">
    <location>
        <position position="935"/>
    </location>
</feature>
<feature type="glycosylation site" description="N-linked (GlcNAc...) asparagine" evidence="4">
    <location>
        <position position="969"/>
    </location>
</feature>
<feature type="disulfide bond" evidence="1">
    <location>
        <begin position="94"/>
        <end position="103"/>
    </location>
</feature>
<feature type="disulfide bond" evidence="1">
    <location>
        <begin position="140"/>
        <end position="162"/>
    </location>
</feature>
<feature type="disulfide bond" evidence="1">
    <location>
        <begin position="185"/>
        <end position="197"/>
    </location>
</feature>
<feature type="disulfide bond" evidence="1">
    <location>
        <begin position="485"/>
        <end position="490"/>
    </location>
</feature>
<feature type="disulfide bond" evidence="1">
    <location>
        <begin position="496"/>
        <end position="550"/>
    </location>
</feature>
<feature type="disulfide bond" evidence="1">
    <location>
        <begin position="615"/>
        <end position="621"/>
    </location>
</feature>
<feature type="disulfide bond" evidence="1">
    <location>
        <begin position="694"/>
        <end position="702"/>
    </location>
</feature>
<feature type="disulfide bond" description="Interchain (between heavy and light chains)" evidence="1">
    <location>
        <begin position="846"/>
        <end position="904"/>
    </location>
</feature>
<feature type="disulfide bond" evidence="1">
    <location>
        <begin position="911"/>
        <end position="916"/>
    </location>
</feature>
<feature type="splice variant" id="VSP_002720" description="In isoform 2." evidence="7">
    <original>RARTRALYEAKRQKAEMKSQPSETERLTDDY</original>
    <variation>PTRYYRIMPKYHAVRIREEERYPPPGSTLPTKKHWVTSWQIRDRYY</variation>
    <location>
        <begin position="1021"/>
        <end position="1051"/>
    </location>
</feature>
<sequence>MGPGPRCAPGDPGWMLGALALMVAASGRFAFAFNLDTRFLVVKEAVNPGSLFGYSVALHRQTERQQRYLLLAGAPRDLSVADGYTNRTGAVYLCPLTALKDDCERMDISEKSDPDHHIIEDMWLGVTVASQGPAGRVLVCAHRYTQVLWSGMEDQRRMVGKCYVRGNDLQLDPGDDWQTYHNEMCNSNTDYLQTGMCQLGTSGGFTQNTVYFGAPGAYNWKGNSYMIQRKDWDLSEYSYKGSEDQGNLYIGYTVQVGSAVLHPTYITVVAGAPRHQHMGAVFLLSQESGGDLKRKQVLEGTQVGAYFGSAIALADLNNDGWQDLLVGAPYYFERKEEVGGAVYVFMNQAGTSFPDQPSLLLHGPSRSAFGISIASIGDINQDGFQDIAVGAPFEGLGKVYIYHSSSGGLLRQPQQIVHGDKLGLPGLSTFGYSLSGKMDVDDNSYPDLLVGSLSDHIVLLRARPVINILQRTLVARPAVLDPSLCTPTSCVQVELCFAYNQSAGNPSYRRNITLAYTLEADRDRRPPRLRFARSQSAVFHGFLSMPETHCQTLELLLMDNVRDKLRPIVIAMNYSLPLRMPDRLKLGMRSLDAYPVLNQAQALENHTEVHFQKECGPDNKCDSNLQMRAAFVSEQLQPLSRLQYSRDTKKLFLSINVTNTPSRERAGEDAHEALLTLEVPPALLLSSVRPSGTCQANETILCELGNPFKRNQRMELLIAFEVIGVTLHTRDLKAQLQLSTSSHQDNLQPMTLILQVDYTLQASLSLMTHRLQSFFGGTVMGEAGMKTVEDVGSPLKYEFQVSPVGDGLAALGTLVLGLEWPYEVTNGKWLLYPTEIIIHSNESWPCQPPGNLVNPLNLILSDPGDKPHSPQRRRRQLDPGGDQGSPPVTLAAAKKAKSETVLTCASGRARCVWLECPIPDTSNVTNVTVKARVWNSTFIEDYRDFDRVRVDGWATLFLRTSIPTINMENKTTWFSVDIDSELVEELPAEIELWLVLVAVSAGLLLLGLIIILLWKCGFFKRARTRALYEAKRQKAEMKSQPSETERLTDDY</sequence>
<organism>
    <name type="scientific">Cricetulus griseus</name>
    <name type="common">Chinese hamster</name>
    <name type="synonym">Cricetulus barabensis griseus</name>
    <dbReference type="NCBI Taxonomy" id="10029"/>
    <lineage>
        <taxon>Eukaryota</taxon>
        <taxon>Metazoa</taxon>
        <taxon>Chordata</taxon>
        <taxon>Craniata</taxon>
        <taxon>Vertebrata</taxon>
        <taxon>Euteleostomi</taxon>
        <taxon>Mammalia</taxon>
        <taxon>Eutheria</taxon>
        <taxon>Euarchontoglires</taxon>
        <taxon>Glires</taxon>
        <taxon>Rodentia</taxon>
        <taxon>Myomorpha</taxon>
        <taxon>Muroidea</taxon>
        <taxon>Cricetidae</taxon>
        <taxon>Cricetinae</taxon>
        <taxon>Cricetulus</taxon>
    </lineage>
</organism>